<reference key="1">
    <citation type="submission" date="2007-05" db="EMBL/GenBank/DDBJ databases">
        <title>Complete sequence of chromosome of Acidiphilium cryptum JF-5.</title>
        <authorList>
            <consortium name="US DOE Joint Genome Institute"/>
            <person name="Copeland A."/>
            <person name="Lucas S."/>
            <person name="Lapidus A."/>
            <person name="Barry K."/>
            <person name="Detter J.C."/>
            <person name="Glavina del Rio T."/>
            <person name="Hammon N."/>
            <person name="Israni S."/>
            <person name="Dalin E."/>
            <person name="Tice H."/>
            <person name="Pitluck S."/>
            <person name="Sims D."/>
            <person name="Brettin T."/>
            <person name="Bruce D."/>
            <person name="Han C."/>
            <person name="Schmutz J."/>
            <person name="Larimer F."/>
            <person name="Land M."/>
            <person name="Hauser L."/>
            <person name="Kyrpides N."/>
            <person name="Kim E."/>
            <person name="Magnuson T."/>
            <person name="Richardson P."/>
        </authorList>
    </citation>
    <scope>NUCLEOTIDE SEQUENCE [LARGE SCALE GENOMIC DNA]</scope>
    <source>
        <strain>JF-5</strain>
    </source>
</reference>
<gene>
    <name evidence="1" type="primary">ppk</name>
    <name type="ordered locus">Acry_2534</name>
</gene>
<organism>
    <name type="scientific">Acidiphilium cryptum (strain JF-5)</name>
    <dbReference type="NCBI Taxonomy" id="349163"/>
    <lineage>
        <taxon>Bacteria</taxon>
        <taxon>Pseudomonadati</taxon>
        <taxon>Pseudomonadota</taxon>
        <taxon>Alphaproteobacteria</taxon>
        <taxon>Acetobacterales</taxon>
        <taxon>Acidocellaceae</taxon>
        <taxon>Acidiphilium</taxon>
    </lineage>
</organism>
<name>PPK1_ACICJ</name>
<feature type="chain" id="PRO_1000133401" description="Polyphosphate kinase">
    <location>
        <begin position="1"/>
        <end position="727"/>
    </location>
</feature>
<feature type="active site" description="Phosphohistidine intermediate" evidence="1">
    <location>
        <position position="445"/>
    </location>
</feature>
<feature type="binding site" evidence="1">
    <location>
        <position position="60"/>
    </location>
    <ligand>
        <name>ATP</name>
        <dbReference type="ChEBI" id="CHEBI:30616"/>
    </ligand>
</feature>
<feature type="binding site" evidence="1">
    <location>
        <position position="385"/>
    </location>
    <ligand>
        <name>Mg(2+)</name>
        <dbReference type="ChEBI" id="CHEBI:18420"/>
    </ligand>
</feature>
<feature type="binding site" evidence="1">
    <location>
        <position position="415"/>
    </location>
    <ligand>
        <name>Mg(2+)</name>
        <dbReference type="ChEBI" id="CHEBI:18420"/>
    </ligand>
</feature>
<feature type="binding site" evidence="1">
    <location>
        <position position="478"/>
    </location>
    <ligand>
        <name>ATP</name>
        <dbReference type="ChEBI" id="CHEBI:30616"/>
    </ligand>
</feature>
<feature type="binding site" evidence="1">
    <location>
        <position position="574"/>
    </location>
    <ligand>
        <name>ATP</name>
        <dbReference type="ChEBI" id="CHEBI:30616"/>
    </ligand>
</feature>
<feature type="binding site" evidence="1">
    <location>
        <position position="602"/>
    </location>
    <ligand>
        <name>ATP</name>
        <dbReference type="ChEBI" id="CHEBI:30616"/>
    </ligand>
</feature>
<comment type="function">
    <text evidence="1">Catalyzes the reversible transfer of the terminal phosphate of ATP to form a long-chain polyphosphate (polyP).</text>
</comment>
<comment type="catalytic activity">
    <reaction evidence="1">
        <text>[phosphate](n) + ATP = [phosphate](n+1) + ADP</text>
        <dbReference type="Rhea" id="RHEA:19573"/>
        <dbReference type="Rhea" id="RHEA-COMP:9859"/>
        <dbReference type="Rhea" id="RHEA-COMP:14280"/>
        <dbReference type="ChEBI" id="CHEBI:16838"/>
        <dbReference type="ChEBI" id="CHEBI:30616"/>
        <dbReference type="ChEBI" id="CHEBI:456216"/>
        <dbReference type="EC" id="2.7.4.1"/>
    </reaction>
</comment>
<comment type="cofactor">
    <cofactor evidence="1">
        <name>Mg(2+)</name>
        <dbReference type="ChEBI" id="CHEBI:18420"/>
    </cofactor>
</comment>
<comment type="PTM">
    <text evidence="1">An intermediate of this reaction is the autophosphorylated ppk in which a phosphate is covalently linked to a histidine residue through a N-P bond.</text>
</comment>
<comment type="similarity">
    <text evidence="1">Belongs to the polyphosphate kinase 1 (PPK1) family.</text>
</comment>
<accession>A5G1J3</accession>
<protein>
    <recommendedName>
        <fullName evidence="1">Polyphosphate kinase</fullName>
        <ecNumber evidence="1">2.7.4.1</ecNumber>
    </recommendedName>
    <alternativeName>
        <fullName evidence="1">ATP-polyphosphate phosphotransferase</fullName>
    </alternativeName>
    <alternativeName>
        <fullName evidence="1">Polyphosphoric acid kinase</fullName>
    </alternativeName>
</protein>
<sequence length="727" mass="81408">MDQETLPRTATEPMPAGDSDRFINRELSWLAFNSRVVAAAENPRYPLLERLRFISISGSNLDEFYSVRVAGLIGQARAGLALRSSDGLTPTQQLGEINRCARALMETQQRVLGTVLAELAGAGLTIIAPHELNEADRAFLDQHFMERVFPVLTPLAIDPAHPFPFVQNMGLVLALKLIRQEDSGVMRALIPLPAQIRRFIRLPDPSPETIRFVKLEDLVILFLDRLFHGFRLAGSGLFRVCRDTDVEFEEEAEDLVQSYETALKRRRRGAAIELTLAADLPDDLRTLVIDEVEAPEDQLFVEPGMLGLVDLKEMIVDDRPELLFPAYTPRFPERIRDFGGDCFAAIRNKDIIVHHPFESFDVVVQFLRQAASDPNVVAIKQTLYRTSRDSPIVGALIEAAESGKSVTAMVELRARFDEEANIRLARALEAAGVQVVYGFLGLKTHAKLSLVVRREGSAMRAYAHFGTGNYHPITARIYTDLSFFTCDQQLTRDAARLFNYMTGYARPEQMDQLVYSPITTRRVIAALIDAEIEAARAGRPSGIWLKLNSLVDERLIDHLYRASAAGVPVSCVVRGICCLRPGVPGLSENIRVKSIIGRFLEHARIAVFANGARMPDRENKVFISSADWMARNMDWRVETFVPIHNPTVHAQVLDQIMAVDLRDDVDSWTLGPDGVWTRVLPGDPPVSAHEYFMTNPSLSGRGSALRGPLTQQQRDQIRYRKTFLTND</sequence>
<proteinExistence type="inferred from homology"/>
<dbReference type="EC" id="2.7.4.1" evidence="1"/>
<dbReference type="EMBL" id="CP000697">
    <property type="protein sequence ID" value="ABQ31725.1"/>
    <property type="molecule type" value="Genomic_DNA"/>
</dbReference>
<dbReference type="RefSeq" id="WP_012040123.1">
    <property type="nucleotide sequence ID" value="NC_009484.1"/>
</dbReference>
<dbReference type="SMR" id="A5G1J3"/>
<dbReference type="STRING" id="349163.Acry_2534"/>
<dbReference type="KEGG" id="acr:Acry_2534"/>
<dbReference type="eggNOG" id="COG0855">
    <property type="taxonomic scope" value="Bacteria"/>
</dbReference>
<dbReference type="HOGENOM" id="CLU_009678_5_0_5"/>
<dbReference type="Proteomes" id="UP000000245">
    <property type="component" value="Chromosome"/>
</dbReference>
<dbReference type="GO" id="GO:0009358">
    <property type="term" value="C:polyphosphate kinase complex"/>
    <property type="evidence" value="ECO:0007669"/>
    <property type="project" value="InterPro"/>
</dbReference>
<dbReference type="GO" id="GO:0005524">
    <property type="term" value="F:ATP binding"/>
    <property type="evidence" value="ECO:0007669"/>
    <property type="project" value="UniProtKB-KW"/>
</dbReference>
<dbReference type="GO" id="GO:0046872">
    <property type="term" value="F:metal ion binding"/>
    <property type="evidence" value="ECO:0007669"/>
    <property type="project" value="UniProtKB-KW"/>
</dbReference>
<dbReference type="GO" id="GO:0008976">
    <property type="term" value="F:polyphosphate kinase activity"/>
    <property type="evidence" value="ECO:0007669"/>
    <property type="project" value="UniProtKB-UniRule"/>
</dbReference>
<dbReference type="GO" id="GO:0006799">
    <property type="term" value="P:polyphosphate biosynthetic process"/>
    <property type="evidence" value="ECO:0007669"/>
    <property type="project" value="UniProtKB-UniRule"/>
</dbReference>
<dbReference type="CDD" id="cd09165">
    <property type="entry name" value="PLDc_PaPPK1_C1_like"/>
    <property type="match status" value="1"/>
</dbReference>
<dbReference type="FunFam" id="3.30.870.10:FF:000001">
    <property type="entry name" value="Polyphosphate kinase"/>
    <property type="match status" value="1"/>
</dbReference>
<dbReference type="Gene3D" id="3.30.870.10">
    <property type="entry name" value="Endonuclease Chain A"/>
    <property type="match status" value="2"/>
</dbReference>
<dbReference type="Gene3D" id="3.30.1840.10">
    <property type="entry name" value="Polyphosphate kinase middle domain"/>
    <property type="match status" value="1"/>
</dbReference>
<dbReference type="Gene3D" id="1.20.58.310">
    <property type="entry name" value="Polyphosphate kinase N-terminal domain"/>
    <property type="match status" value="1"/>
</dbReference>
<dbReference type="HAMAP" id="MF_00347">
    <property type="entry name" value="Polyphosphate_kinase"/>
    <property type="match status" value="1"/>
</dbReference>
<dbReference type="InterPro" id="IPR003414">
    <property type="entry name" value="PP_kinase"/>
</dbReference>
<dbReference type="InterPro" id="IPR041108">
    <property type="entry name" value="PP_kinase_C_1"/>
</dbReference>
<dbReference type="InterPro" id="IPR024953">
    <property type="entry name" value="PP_kinase_middle"/>
</dbReference>
<dbReference type="InterPro" id="IPR036830">
    <property type="entry name" value="PP_kinase_middle_dom_sf"/>
</dbReference>
<dbReference type="InterPro" id="IPR025200">
    <property type="entry name" value="PPK_C_dom2"/>
</dbReference>
<dbReference type="InterPro" id="IPR025198">
    <property type="entry name" value="PPK_N_dom"/>
</dbReference>
<dbReference type="InterPro" id="IPR036832">
    <property type="entry name" value="PPK_N_dom_sf"/>
</dbReference>
<dbReference type="NCBIfam" id="TIGR03705">
    <property type="entry name" value="poly_P_kin"/>
    <property type="match status" value="1"/>
</dbReference>
<dbReference type="NCBIfam" id="NF003917">
    <property type="entry name" value="PRK05443.1-1"/>
    <property type="match status" value="1"/>
</dbReference>
<dbReference type="NCBIfam" id="NF003918">
    <property type="entry name" value="PRK05443.1-2"/>
    <property type="match status" value="1"/>
</dbReference>
<dbReference type="NCBIfam" id="NF003919">
    <property type="entry name" value="PRK05443.1-4"/>
    <property type="match status" value="1"/>
</dbReference>
<dbReference type="NCBIfam" id="NF003921">
    <property type="entry name" value="PRK05443.2-2"/>
    <property type="match status" value="1"/>
</dbReference>
<dbReference type="PANTHER" id="PTHR30218">
    <property type="entry name" value="POLYPHOSPHATE KINASE"/>
    <property type="match status" value="1"/>
</dbReference>
<dbReference type="PANTHER" id="PTHR30218:SF0">
    <property type="entry name" value="POLYPHOSPHATE KINASE"/>
    <property type="match status" value="1"/>
</dbReference>
<dbReference type="Pfam" id="PF02503">
    <property type="entry name" value="PP_kinase"/>
    <property type="match status" value="1"/>
</dbReference>
<dbReference type="Pfam" id="PF13090">
    <property type="entry name" value="PP_kinase_C"/>
    <property type="match status" value="1"/>
</dbReference>
<dbReference type="Pfam" id="PF17941">
    <property type="entry name" value="PP_kinase_C_1"/>
    <property type="match status" value="1"/>
</dbReference>
<dbReference type="Pfam" id="PF13089">
    <property type="entry name" value="PP_kinase_N"/>
    <property type="match status" value="1"/>
</dbReference>
<dbReference type="PIRSF" id="PIRSF015589">
    <property type="entry name" value="PP_kinase"/>
    <property type="match status" value="1"/>
</dbReference>
<dbReference type="SUPFAM" id="SSF56024">
    <property type="entry name" value="Phospholipase D/nuclease"/>
    <property type="match status" value="2"/>
</dbReference>
<dbReference type="SUPFAM" id="SSF143724">
    <property type="entry name" value="PHP14-like"/>
    <property type="match status" value="1"/>
</dbReference>
<dbReference type="SUPFAM" id="SSF140356">
    <property type="entry name" value="PPK N-terminal domain-like"/>
    <property type="match status" value="1"/>
</dbReference>
<evidence type="ECO:0000255" key="1">
    <source>
        <dbReference type="HAMAP-Rule" id="MF_00347"/>
    </source>
</evidence>
<keyword id="KW-0067">ATP-binding</keyword>
<keyword id="KW-0418">Kinase</keyword>
<keyword id="KW-0460">Magnesium</keyword>
<keyword id="KW-0479">Metal-binding</keyword>
<keyword id="KW-0547">Nucleotide-binding</keyword>
<keyword id="KW-0597">Phosphoprotein</keyword>
<keyword id="KW-1185">Reference proteome</keyword>
<keyword id="KW-0808">Transferase</keyword>